<feature type="chain" id="PRO_0000443929" description="Autophagy-related protein 33">
    <location>
        <begin position="1"/>
        <end position="198"/>
    </location>
</feature>
<feature type="transmembrane region" description="Helical" evidence="2">
    <location>
        <begin position="17"/>
        <end position="37"/>
    </location>
</feature>
<feature type="transmembrane region" description="Helical" evidence="2">
    <location>
        <begin position="60"/>
        <end position="80"/>
    </location>
</feature>
<feature type="transmembrane region" description="Helical" evidence="2">
    <location>
        <begin position="86"/>
        <end position="106"/>
    </location>
</feature>
<feature type="transmembrane region" description="Helical" evidence="2">
    <location>
        <begin position="171"/>
        <end position="191"/>
    </location>
</feature>
<feature type="region of interest" description="Disordered" evidence="3">
    <location>
        <begin position="111"/>
        <end position="147"/>
    </location>
</feature>
<feature type="compositionally biased region" description="Low complexity" evidence="3">
    <location>
        <begin position="112"/>
        <end position="121"/>
    </location>
</feature>
<feature type="compositionally biased region" description="Basic and acidic residues" evidence="3">
    <location>
        <begin position="126"/>
        <end position="142"/>
    </location>
</feature>
<protein>
    <recommendedName>
        <fullName evidence="4">Autophagy-related protein 33</fullName>
    </recommendedName>
</protein>
<evidence type="ECO:0000250" key="1">
    <source>
        <dbReference type="UniProtKB" id="Q06485"/>
    </source>
</evidence>
<evidence type="ECO:0000255" key="2"/>
<evidence type="ECO:0000256" key="3">
    <source>
        <dbReference type="SAM" id="MobiDB-lite"/>
    </source>
</evidence>
<evidence type="ECO:0000303" key="4">
    <source>
    </source>
</evidence>
<evidence type="ECO:0000303" key="5">
    <source>
    </source>
</evidence>
<evidence type="ECO:0000305" key="6"/>
<evidence type="ECO:0000305" key="7">
    <source>
    </source>
</evidence>
<name>ATG33_GIBZE</name>
<sequence>MTATGTSVSLLKFVGTVSLGLLTGVSYSISSLALPALLRLPSSASASHGLSTLSAALKTPVLALTSLASAPFLISFFLAPRSSRHPYLLYTAILATLSSVAPILIPTPTPAPRRTASSAPRKSSRAKMEASYEVLGDAHSEPASDEDIEDINGEEVRAEVEGLTRSYLARTAISALGFAMAVVGIWGDGAPQSVVYVS</sequence>
<organism>
    <name type="scientific">Gibberella zeae (strain ATCC MYA-4620 / CBS 123657 / FGSC 9075 / NRRL 31084 / PH-1)</name>
    <name type="common">Wheat head blight fungus</name>
    <name type="synonym">Fusarium graminearum</name>
    <dbReference type="NCBI Taxonomy" id="229533"/>
    <lineage>
        <taxon>Eukaryota</taxon>
        <taxon>Fungi</taxon>
        <taxon>Dikarya</taxon>
        <taxon>Ascomycota</taxon>
        <taxon>Pezizomycotina</taxon>
        <taxon>Sordariomycetes</taxon>
        <taxon>Hypocreomycetidae</taxon>
        <taxon>Hypocreales</taxon>
        <taxon>Nectriaceae</taxon>
        <taxon>Fusarium</taxon>
    </lineage>
</organism>
<gene>
    <name evidence="5" type="primary">ATG33</name>
    <name type="ORF">FG00549</name>
    <name type="ORF">FGRAMPH1_01T01401</name>
</gene>
<dbReference type="EMBL" id="HG970332">
    <property type="protein sequence ID" value="CEF72501.1"/>
    <property type="molecule type" value="Genomic_DNA"/>
</dbReference>
<dbReference type="RefSeq" id="XP_011316230.1">
    <property type="nucleotide sequence ID" value="XM_011317928.1"/>
</dbReference>
<dbReference type="SMR" id="I1RAL7"/>
<dbReference type="FunCoup" id="I1RAL7">
    <property type="interactions" value="95"/>
</dbReference>
<dbReference type="STRING" id="229533.I1RAL7"/>
<dbReference type="KEGG" id="fgr:FGSG_00549"/>
<dbReference type="VEuPathDB" id="FungiDB:FGRAMPH1_01G01401"/>
<dbReference type="eggNOG" id="ENOG502S77Q">
    <property type="taxonomic scope" value="Eukaryota"/>
</dbReference>
<dbReference type="HOGENOM" id="CLU_065432_0_0_1"/>
<dbReference type="InParanoid" id="I1RAL7"/>
<dbReference type="OrthoDB" id="133525at110618"/>
<dbReference type="Proteomes" id="UP000070720">
    <property type="component" value="Chromosome 1"/>
</dbReference>
<dbReference type="GO" id="GO:0005741">
    <property type="term" value="C:mitochondrial outer membrane"/>
    <property type="evidence" value="ECO:0007669"/>
    <property type="project" value="TreeGrafter"/>
</dbReference>
<dbReference type="GO" id="GO:0000422">
    <property type="term" value="P:autophagy of mitochondrion"/>
    <property type="evidence" value="ECO:0007669"/>
    <property type="project" value="TreeGrafter"/>
</dbReference>
<dbReference type="GO" id="GO:0016236">
    <property type="term" value="P:macroautophagy"/>
    <property type="evidence" value="ECO:0007669"/>
    <property type="project" value="TreeGrafter"/>
</dbReference>
<dbReference type="InterPro" id="IPR051668">
    <property type="entry name" value="ATG33"/>
</dbReference>
<dbReference type="PANTHER" id="PTHR37278">
    <property type="entry name" value="AUTOPHAGY-RELATED PROTEIN 33-RELATED"/>
    <property type="match status" value="1"/>
</dbReference>
<dbReference type="PANTHER" id="PTHR37278:SF1">
    <property type="entry name" value="AUTOPHAGY-RELATED PROTEIN 33-RELATED"/>
    <property type="match status" value="1"/>
</dbReference>
<keyword id="KW-0072">Autophagy</keyword>
<keyword id="KW-0472">Membrane</keyword>
<keyword id="KW-0496">Mitochondrion</keyword>
<keyword id="KW-1185">Reference proteome</keyword>
<keyword id="KW-0812">Transmembrane</keyword>
<keyword id="KW-1133">Transmembrane helix</keyword>
<accession>I1RAL7</accession>
<comment type="function">
    <text evidence="1 7">Involved in the selective degradation of mitochondria via autophagy during starvation and at post-log phase (By similarity). Autophagy is required for proper vegetative growth, asexual/sexual reproduction, and full virulence (PubMed:28894236). Autophagy is particularly involved in the biosynthesis of deoxynivalenol (DON), an important virulence determinant (PubMed:28894236).</text>
</comment>
<comment type="subcellular location">
    <subcellularLocation>
        <location evidence="6">Mitochondrion membrane</location>
        <topology evidence="6">Multi-pass membrane protein</topology>
    </subcellularLocation>
</comment>
<comment type="similarity">
    <text evidence="6">Belongs to the ATG33 family.</text>
</comment>
<proteinExistence type="inferred from homology"/>
<reference key="1">
    <citation type="journal article" date="2007" name="Science">
        <title>The Fusarium graminearum genome reveals a link between localized polymorphism and pathogen specialization.</title>
        <authorList>
            <person name="Cuomo C.A."/>
            <person name="Gueldener U."/>
            <person name="Xu J.-R."/>
            <person name="Trail F."/>
            <person name="Turgeon B.G."/>
            <person name="Di Pietro A."/>
            <person name="Walton J.D."/>
            <person name="Ma L.-J."/>
            <person name="Baker S.E."/>
            <person name="Rep M."/>
            <person name="Adam G."/>
            <person name="Antoniw J."/>
            <person name="Baldwin T."/>
            <person name="Calvo S.E."/>
            <person name="Chang Y.-L."/>
            <person name="DeCaprio D."/>
            <person name="Gale L.R."/>
            <person name="Gnerre S."/>
            <person name="Goswami R.S."/>
            <person name="Hammond-Kosack K."/>
            <person name="Harris L.J."/>
            <person name="Hilburn K."/>
            <person name="Kennell J.C."/>
            <person name="Kroken S."/>
            <person name="Magnuson J.K."/>
            <person name="Mannhaupt G."/>
            <person name="Mauceli E.W."/>
            <person name="Mewes H.-W."/>
            <person name="Mitterbauer R."/>
            <person name="Muehlbauer G."/>
            <person name="Muensterkoetter M."/>
            <person name="Nelson D."/>
            <person name="O'Donnell K."/>
            <person name="Ouellet T."/>
            <person name="Qi W."/>
            <person name="Quesneville H."/>
            <person name="Roncero M.I.G."/>
            <person name="Seong K.-Y."/>
            <person name="Tetko I.V."/>
            <person name="Urban M."/>
            <person name="Waalwijk C."/>
            <person name="Ward T.J."/>
            <person name="Yao J."/>
            <person name="Birren B.W."/>
            <person name="Kistler H.C."/>
        </authorList>
    </citation>
    <scope>NUCLEOTIDE SEQUENCE [LARGE SCALE GENOMIC DNA]</scope>
    <source>
        <strain>ATCC MYA-4620 / CBS 123657 / FGSC 9075 / NRRL 31084 / PH-1</strain>
    </source>
</reference>
<reference key="2">
    <citation type="journal article" date="2010" name="Nature">
        <title>Comparative genomics reveals mobile pathogenicity chromosomes in Fusarium.</title>
        <authorList>
            <person name="Ma L.-J."/>
            <person name="van der Does H.C."/>
            <person name="Borkovich K.A."/>
            <person name="Coleman J.J."/>
            <person name="Daboussi M.-J."/>
            <person name="Di Pietro A."/>
            <person name="Dufresne M."/>
            <person name="Freitag M."/>
            <person name="Grabherr M."/>
            <person name="Henrissat B."/>
            <person name="Houterman P.M."/>
            <person name="Kang S."/>
            <person name="Shim W.-B."/>
            <person name="Woloshuk C."/>
            <person name="Xie X."/>
            <person name="Xu J.-R."/>
            <person name="Antoniw J."/>
            <person name="Baker S.E."/>
            <person name="Bluhm B.H."/>
            <person name="Breakspear A."/>
            <person name="Brown D.W."/>
            <person name="Butchko R.A.E."/>
            <person name="Chapman S."/>
            <person name="Coulson R."/>
            <person name="Coutinho P.M."/>
            <person name="Danchin E.G.J."/>
            <person name="Diener A."/>
            <person name="Gale L.R."/>
            <person name="Gardiner D.M."/>
            <person name="Goff S."/>
            <person name="Hammond-Kosack K.E."/>
            <person name="Hilburn K."/>
            <person name="Hua-Van A."/>
            <person name="Jonkers W."/>
            <person name="Kazan K."/>
            <person name="Kodira C.D."/>
            <person name="Koehrsen M."/>
            <person name="Kumar L."/>
            <person name="Lee Y.-H."/>
            <person name="Li L."/>
            <person name="Manners J.M."/>
            <person name="Miranda-Saavedra D."/>
            <person name="Mukherjee M."/>
            <person name="Park G."/>
            <person name="Park J."/>
            <person name="Park S.-Y."/>
            <person name="Proctor R.H."/>
            <person name="Regev A."/>
            <person name="Ruiz-Roldan M.C."/>
            <person name="Sain D."/>
            <person name="Sakthikumar S."/>
            <person name="Sykes S."/>
            <person name="Schwartz D.C."/>
            <person name="Turgeon B.G."/>
            <person name="Wapinski I."/>
            <person name="Yoder O."/>
            <person name="Young S."/>
            <person name="Zeng Q."/>
            <person name="Zhou S."/>
            <person name="Galagan J."/>
            <person name="Cuomo C.A."/>
            <person name="Kistler H.C."/>
            <person name="Rep M."/>
        </authorList>
    </citation>
    <scope>GENOME REANNOTATION</scope>
    <source>
        <strain>ATCC MYA-4620 / CBS 123657 / FGSC 9075 / NRRL 31084 / PH-1</strain>
    </source>
</reference>
<reference key="3">
    <citation type="journal article" date="2015" name="BMC Genomics">
        <title>The completed genome sequence of the pathogenic ascomycete fungus Fusarium graminearum.</title>
        <authorList>
            <person name="King R."/>
            <person name="Urban M."/>
            <person name="Hammond-Kosack M.C.U."/>
            <person name="Hassani-Pak K."/>
            <person name="Hammond-Kosack K.E."/>
        </authorList>
    </citation>
    <scope>NUCLEOTIDE SEQUENCE [LARGE SCALE GENOMIC DNA]</scope>
    <source>
        <strain>ATCC MYA-4620 / CBS 123657 / FGSC 9075 / NRRL 31084 / PH-1</strain>
    </source>
</reference>
<reference key="4">
    <citation type="journal article" date="2017" name="Sci. Rep.">
        <title>Genome-wide functional analysis reveals that autophagy is necessary for growth, sporulation, deoxynivalenol production and virulence in Fusarium graminearum.</title>
        <authorList>
            <person name="Lv W."/>
            <person name="Wang C."/>
            <person name="Yang N."/>
            <person name="Que Y."/>
            <person name="Talbot N.J."/>
            <person name="Wang Z."/>
        </authorList>
    </citation>
    <scope>IDENTIFICATION</scope>
    <scope>FUNCTION</scope>
</reference>